<organism>
    <name type="scientific">Drosophila melanogaster</name>
    <name type="common">Fruit fly</name>
    <dbReference type="NCBI Taxonomy" id="7227"/>
    <lineage>
        <taxon>Eukaryota</taxon>
        <taxon>Metazoa</taxon>
        <taxon>Ecdysozoa</taxon>
        <taxon>Arthropoda</taxon>
        <taxon>Hexapoda</taxon>
        <taxon>Insecta</taxon>
        <taxon>Pterygota</taxon>
        <taxon>Neoptera</taxon>
        <taxon>Endopterygota</taxon>
        <taxon>Diptera</taxon>
        <taxon>Brachycera</taxon>
        <taxon>Muscomorpha</taxon>
        <taxon>Ephydroidea</taxon>
        <taxon>Drosophilidae</taxon>
        <taxon>Drosophila</taxon>
        <taxon>Sophophora</taxon>
    </lineage>
</organism>
<dbReference type="EC" id="1.14.-.-"/>
<dbReference type="EMBL" id="AE013599">
    <property type="protein sequence ID" value="AAG22266.1"/>
    <property type="molecule type" value="Genomic_DNA"/>
</dbReference>
<dbReference type="RefSeq" id="NP_611001.2">
    <property type="nucleotide sequence ID" value="NM_137157.4"/>
</dbReference>
<dbReference type="SMR" id="P82711"/>
<dbReference type="BioGRID" id="62404">
    <property type="interactions" value="2"/>
</dbReference>
<dbReference type="DIP" id="DIP-17731N"/>
<dbReference type="FunCoup" id="P82711">
    <property type="interactions" value="17"/>
</dbReference>
<dbReference type="IntAct" id="P82711">
    <property type="interactions" value="1"/>
</dbReference>
<dbReference type="STRING" id="7227.FBpp0086583"/>
<dbReference type="PaxDb" id="7227-FBpp0086583"/>
<dbReference type="DNASU" id="36662"/>
<dbReference type="EnsemblMetazoa" id="FBtr0087453">
    <property type="protein sequence ID" value="FBpp0086583"/>
    <property type="gene ID" value="FBgn0033979"/>
</dbReference>
<dbReference type="GeneID" id="36662"/>
<dbReference type="KEGG" id="dme:Dmel_CG10243"/>
<dbReference type="UCSC" id="CG10243-RA">
    <property type="organism name" value="d. melanogaster"/>
</dbReference>
<dbReference type="AGR" id="FB:FBgn0033979"/>
<dbReference type="CTD" id="36662"/>
<dbReference type="FlyBase" id="FBgn0033979">
    <property type="gene designation" value="Cyp6a19"/>
</dbReference>
<dbReference type="VEuPathDB" id="VectorBase:FBgn0033979"/>
<dbReference type="eggNOG" id="KOG0158">
    <property type="taxonomic scope" value="Eukaryota"/>
</dbReference>
<dbReference type="GeneTree" id="ENSGT00940000165972"/>
<dbReference type="HOGENOM" id="CLU_001570_5_2_1"/>
<dbReference type="InParanoid" id="P82711"/>
<dbReference type="OMA" id="LMRTMQL"/>
<dbReference type="OrthoDB" id="2789670at2759"/>
<dbReference type="PhylomeDB" id="P82711"/>
<dbReference type="BioGRID-ORCS" id="36662">
    <property type="hits" value="0 hits in 3 CRISPR screens"/>
</dbReference>
<dbReference type="GenomeRNAi" id="36662"/>
<dbReference type="PRO" id="PR:P82711"/>
<dbReference type="Proteomes" id="UP000000803">
    <property type="component" value="Chromosome 2R"/>
</dbReference>
<dbReference type="Bgee" id="FBgn0033979">
    <property type="expression patterns" value="Expressed in secondary oocyte and 27 other cell types or tissues"/>
</dbReference>
<dbReference type="ExpressionAtlas" id="P82711">
    <property type="expression patterns" value="baseline and differential"/>
</dbReference>
<dbReference type="GO" id="GO:0005789">
    <property type="term" value="C:endoplasmic reticulum membrane"/>
    <property type="evidence" value="ECO:0007669"/>
    <property type="project" value="UniProtKB-SubCell"/>
</dbReference>
<dbReference type="GO" id="GO:0020037">
    <property type="term" value="F:heme binding"/>
    <property type="evidence" value="ECO:0007669"/>
    <property type="project" value="InterPro"/>
</dbReference>
<dbReference type="GO" id="GO:0005506">
    <property type="term" value="F:iron ion binding"/>
    <property type="evidence" value="ECO:0007669"/>
    <property type="project" value="InterPro"/>
</dbReference>
<dbReference type="GO" id="GO:0004497">
    <property type="term" value="F:monooxygenase activity"/>
    <property type="evidence" value="ECO:0007669"/>
    <property type="project" value="UniProtKB-KW"/>
</dbReference>
<dbReference type="GO" id="GO:0016705">
    <property type="term" value="F:oxidoreductase activity, acting on paired donors, with incorporation or reduction of molecular oxygen"/>
    <property type="evidence" value="ECO:0007669"/>
    <property type="project" value="InterPro"/>
</dbReference>
<dbReference type="CDD" id="cd11056">
    <property type="entry name" value="CYP6-like"/>
    <property type="match status" value="1"/>
</dbReference>
<dbReference type="FunFam" id="1.10.630.10:FF:000042">
    <property type="entry name" value="Cytochrome P450"/>
    <property type="match status" value="1"/>
</dbReference>
<dbReference type="Gene3D" id="1.10.630.10">
    <property type="entry name" value="Cytochrome P450"/>
    <property type="match status" value="1"/>
</dbReference>
<dbReference type="InterPro" id="IPR001128">
    <property type="entry name" value="Cyt_P450"/>
</dbReference>
<dbReference type="InterPro" id="IPR017972">
    <property type="entry name" value="Cyt_P450_CS"/>
</dbReference>
<dbReference type="InterPro" id="IPR002401">
    <property type="entry name" value="Cyt_P450_E_grp-I"/>
</dbReference>
<dbReference type="InterPro" id="IPR036396">
    <property type="entry name" value="Cyt_P450_sf"/>
</dbReference>
<dbReference type="InterPro" id="IPR050476">
    <property type="entry name" value="Insect_CytP450_Detox"/>
</dbReference>
<dbReference type="PANTHER" id="PTHR24292">
    <property type="entry name" value="CYTOCHROME P450"/>
    <property type="match status" value="1"/>
</dbReference>
<dbReference type="PANTHER" id="PTHR24292:SF100">
    <property type="entry name" value="CYTOCHROME P450 6A16, ISOFORM B-RELATED"/>
    <property type="match status" value="1"/>
</dbReference>
<dbReference type="Pfam" id="PF00067">
    <property type="entry name" value="p450"/>
    <property type="match status" value="1"/>
</dbReference>
<dbReference type="PRINTS" id="PR00463">
    <property type="entry name" value="EP450I"/>
</dbReference>
<dbReference type="PRINTS" id="PR00385">
    <property type="entry name" value="P450"/>
</dbReference>
<dbReference type="SUPFAM" id="SSF48264">
    <property type="entry name" value="Cytochrome P450"/>
    <property type="match status" value="1"/>
</dbReference>
<dbReference type="PROSITE" id="PS00086">
    <property type="entry name" value="CYTOCHROME_P450"/>
    <property type="match status" value="1"/>
</dbReference>
<reference key="1">
    <citation type="journal article" date="2000" name="Science">
        <title>The genome sequence of Drosophila melanogaster.</title>
        <authorList>
            <person name="Adams M.D."/>
            <person name="Celniker S.E."/>
            <person name="Holt R.A."/>
            <person name="Evans C.A."/>
            <person name="Gocayne J.D."/>
            <person name="Amanatides P.G."/>
            <person name="Scherer S.E."/>
            <person name="Li P.W."/>
            <person name="Hoskins R.A."/>
            <person name="Galle R.F."/>
            <person name="George R.A."/>
            <person name="Lewis S.E."/>
            <person name="Richards S."/>
            <person name="Ashburner M."/>
            <person name="Henderson S.N."/>
            <person name="Sutton G.G."/>
            <person name="Wortman J.R."/>
            <person name="Yandell M.D."/>
            <person name="Zhang Q."/>
            <person name="Chen L.X."/>
            <person name="Brandon R.C."/>
            <person name="Rogers Y.-H.C."/>
            <person name="Blazej R.G."/>
            <person name="Champe M."/>
            <person name="Pfeiffer B.D."/>
            <person name="Wan K.H."/>
            <person name="Doyle C."/>
            <person name="Baxter E.G."/>
            <person name="Helt G."/>
            <person name="Nelson C.R."/>
            <person name="Miklos G.L.G."/>
            <person name="Abril J.F."/>
            <person name="Agbayani A."/>
            <person name="An H.-J."/>
            <person name="Andrews-Pfannkoch C."/>
            <person name="Baldwin D."/>
            <person name="Ballew R.M."/>
            <person name="Basu A."/>
            <person name="Baxendale J."/>
            <person name="Bayraktaroglu L."/>
            <person name="Beasley E.M."/>
            <person name="Beeson K.Y."/>
            <person name="Benos P.V."/>
            <person name="Berman B.P."/>
            <person name="Bhandari D."/>
            <person name="Bolshakov S."/>
            <person name="Borkova D."/>
            <person name="Botchan M.R."/>
            <person name="Bouck J."/>
            <person name="Brokstein P."/>
            <person name="Brottier P."/>
            <person name="Burtis K.C."/>
            <person name="Busam D.A."/>
            <person name="Butler H."/>
            <person name="Cadieu E."/>
            <person name="Center A."/>
            <person name="Chandra I."/>
            <person name="Cherry J.M."/>
            <person name="Cawley S."/>
            <person name="Dahlke C."/>
            <person name="Davenport L.B."/>
            <person name="Davies P."/>
            <person name="de Pablos B."/>
            <person name="Delcher A."/>
            <person name="Deng Z."/>
            <person name="Mays A.D."/>
            <person name="Dew I."/>
            <person name="Dietz S.M."/>
            <person name="Dodson K."/>
            <person name="Doup L.E."/>
            <person name="Downes M."/>
            <person name="Dugan-Rocha S."/>
            <person name="Dunkov B.C."/>
            <person name="Dunn P."/>
            <person name="Durbin K.J."/>
            <person name="Evangelista C.C."/>
            <person name="Ferraz C."/>
            <person name="Ferriera S."/>
            <person name="Fleischmann W."/>
            <person name="Fosler C."/>
            <person name="Gabrielian A.E."/>
            <person name="Garg N.S."/>
            <person name="Gelbart W.M."/>
            <person name="Glasser K."/>
            <person name="Glodek A."/>
            <person name="Gong F."/>
            <person name="Gorrell J.H."/>
            <person name="Gu Z."/>
            <person name="Guan P."/>
            <person name="Harris M."/>
            <person name="Harris N.L."/>
            <person name="Harvey D.A."/>
            <person name="Heiman T.J."/>
            <person name="Hernandez J.R."/>
            <person name="Houck J."/>
            <person name="Hostin D."/>
            <person name="Houston K.A."/>
            <person name="Howland T.J."/>
            <person name="Wei M.-H."/>
            <person name="Ibegwam C."/>
            <person name="Jalali M."/>
            <person name="Kalush F."/>
            <person name="Karpen G.H."/>
            <person name="Ke Z."/>
            <person name="Kennison J.A."/>
            <person name="Ketchum K.A."/>
            <person name="Kimmel B.E."/>
            <person name="Kodira C.D."/>
            <person name="Kraft C.L."/>
            <person name="Kravitz S."/>
            <person name="Kulp D."/>
            <person name="Lai Z."/>
            <person name="Lasko P."/>
            <person name="Lei Y."/>
            <person name="Levitsky A.A."/>
            <person name="Li J.H."/>
            <person name="Li Z."/>
            <person name="Liang Y."/>
            <person name="Lin X."/>
            <person name="Liu X."/>
            <person name="Mattei B."/>
            <person name="McIntosh T.C."/>
            <person name="McLeod M.P."/>
            <person name="McPherson D."/>
            <person name="Merkulov G."/>
            <person name="Milshina N.V."/>
            <person name="Mobarry C."/>
            <person name="Morris J."/>
            <person name="Moshrefi A."/>
            <person name="Mount S.M."/>
            <person name="Moy M."/>
            <person name="Murphy B."/>
            <person name="Murphy L."/>
            <person name="Muzny D.M."/>
            <person name="Nelson D.L."/>
            <person name="Nelson D.R."/>
            <person name="Nelson K.A."/>
            <person name="Nixon K."/>
            <person name="Nusskern D.R."/>
            <person name="Pacleb J.M."/>
            <person name="Palazzolo M."/>
            <person name="Pittman G.S."/>
            <person name="Pan S."/>
            <person name="Pollard J."/>
            <person name="Puri V."/>
            <person name="Reese M.G."/>
            <person name="Reinert K."/>
            <person name="Remington K."/>
            <person name="Saunders R.D.C."/>
            <person name="Scheeler F."/>
            <person name="Shen H."/>
            <person name="Shue B.C."/>
            <person name="Siden-Kiamos I."/>
            <person name="Simpson M."/>
            <person name="Skupski M.P."/>
            <person name="Smith T.J."/>
            <person name="Spier E."/>
            <person name="Spradling A.C."/>
            <person name="Stapleton M."/>
            <person name="Strong R."/>
            <person name="Sun E."/>
            <person name="Svirskas R."/>
            <person name="Tector C."/>
            <person name="Turner R."/>
            <person name="Venter E."/>
            <person name="Wang A.H."/>
            <person name="Wang X."/>
            <person name="Wang Z.-Y."/>
            <person name="Wassarman D.A."/>
            <person name="Weinstock G.M."/>
            <person name="Weissenbach J."/>
            <person name="Williams S.M."/>
            <person name="Woodage T."/>
            <person name="Worley K.C."/>
            <person name="Wu D."/>
            <person name="Yang S."/>
            <person name="Yao Q.A."/>
            <person name="Ye J."/>
            <person name="Yeh R.-F."/>
            <person name="Zaveri J.S."/>
            <person name="Zhan M."/>
            <person name="Zhang G."/>
            <person name="Zhao Q."/>
            <person name="Zheng L."/>
            <person name="Zheng X.H."/>
            <person name="Zhong F.N."/>
            <person name="Zhong W."/>
            <person name="Zhou X."/>
            <person name="Zhu S.C."/>
            <person name="Zhu X."/>
            <person name="Smith H.O."/>
            <person name="Gibbs R.A."/>
            <person name="Myers E.W."/>
            <person name="Rubin G.M."/>
            <person name="Venter J.C."/>
        </authorList>
    </citation>
    <scope>NUCLEOTIDE SEQUENCE [LARGE SCALE GENOMIC DNA]</scope>
    <source>
        <strain>Berkeley</strain>
    </source>
</reference>
<reference key="2">
    <citation type="journal article" date="2002" name="Genome Biol.">
        <title>Annotation of the Drosophila melanogaster euchromatic genome: a systematic review.</title>
        <authorList>
            <person name="Misra S."/>
            <person name="Crosby M.A."/>
            <person name="Mungall C.J."/>
            <person name="Matthews B.B."/>
            <person name="Campbell K.S."/>
            <person name="Hradecky P."/>
            <person name="Huang Y."/>
            <person name="Kaminker J.S."/>
            <person name="Millburn G.H."/>
            <person name="Prochnik S.E."/>
            <person name="Smith C.D."/>
            <person name="Tupy J.L."/>
            <person name="Whitfield E.J."/>
            <person name="Bayraktaroglu L."/>
            <person name="Berman B.P."/>
            <person name="Bettencourt B.R."/>
            <person name="Celniker S.E."/>
            <person name="de Grey A.D.N.J."/>
            <person name="Drysdale R.A."/>
            <person name="Harris N.L."/>
            <person name="Richter J."/>
            <person name="Russo S."/>
            <person name="Schroeder A.J."/>
            <person name="Shu S.Q."/>
            <person name="Stapleton M."/>
            <person name="Yamada C."/>
            <person name="Ashburner M."/>
            <person name="Gelbart W.M."/>
            <person name="Rubin G.M."/>
            <person name="Lewis S.E."/>
        </authorList>
    </citation>
    <scope>GENOME REANNOTATION</scope>
    <source>
        <strain>Berkeley</strain>
    </source>
</reference>
<keyword id="KW-0256">Endoplasmic reticulum</keyword>
<keyword id="KW-0349">Heme</keyword>
<keyword id="KW-0408">Iron</keyword>
<keyword id="KW-0472">Membrane</keyword>
<keyword id="KW-0479">Metal-binding</keyword>
<keyword id="KW-0492">Microsome</keyword>
<keyword id="KW-0503">Monooxygenase</keyword>
<keyword id="KW-0560">Oxidoreductase</keyword>
<keyword id="KW-1185">Reference proteome</keyword>
<name>C6A19_DROME</name>
<protein>
    <recommendedName>
        <fullName>Probable cytochrome P450 6a19</fullName>
        <ecNumber>1.14.-.-</ecNumber>
    </recommendedName>
    <alternativeName>
        <fullName>CYPVIA19</fullName>
    </alternativeName>
</protein>
<evidence type="ECO:0000250" key="1"/>
<evidence type="ECO:0000305" key="2"/>
<feature type="chain" id="PRO_0000051873" description="Probable cytochrome P450 6a19">
    <location>
        <begin position="1"/>
        <end position="503"/>
    </location>
</feature>
<feature type="binding site" description="axial binding residue" evidence="1">
    <location>
        <position position="445"/>
    </location>
    <ligand>
        <name>heme</name>
        <dbReference type="ChEBI" id="CHEBI:30413"/>
    </ligand>
    <ligandPart>
        <name>Fe</name>
        <dbReference type="ChEBI" id="CHEBI:18248"/>
    </ligandPart>
</feature>
<sequence>MAILLGLVVGVLTLVAWWVLQNYTYWKRRGIPHDPPNIPLGNTGELWRTMPLAGILKRTYLKFRKQTDGPFAGFYLYAMKYIVITDVDFVKTVLIRDFDKFHDRGVYHNEKDDPLTNNLATIEGQKWKNLRQKLTHTFTSAKMKSMFSTVLNVGDEMIRVVDEKISSSSQTLEVTDIVSRFTSDVIGICAFGLKCNSLRDPKAEFVQMGYSALRERRHGWLVDLLIFGMPKLAVKLGFQFLLPSVQKFYMKIVQDTIDYRMKRKVTRNDFMDTLIDMKQQYDKGDKENGLAFNEVAAQAFVFFLAGFEAGSTTMGFTLYELACNQDVQDKLRAEIDSVLERYNGKLEYDSMQDLFYMEKVINESLRKHPVVAHLARIATKPYQHSNPKYFIEAGTGVLVSTLGIHHDPEFYPEPEKFIPERFDEEQVKKRPTCAFLPFGAGPRNCIGLRFGRMQVIIGLALLIHNFRFELHPKTPVPMKYTINNLLLGSEGGIHLNITKVVRD</sequence>
<proteinExistence type="inferred from homology"/>
<comment type="function">
    <text evidence="1">May be involved in the metabolism of insect hormones and in the breakdown of synthetic insecticides.</text>
</comment>
<comment type="cofactor">
    <cofactor evidence="1">
        <name>heme</name>
        <dbReference type="ChEBI" id="CHEBI:30413"/>
    </cofactor>
</comment>
<comment type="subcellular location">
    <subcellularLocation>
        <location evidence="2">Endoplasmic reticulum membrane</location>
        <topology evidence="2">Peripheral membrane protein</topology>
    </subcellularLocation>
    <subcellularLocation>
        <location evidence="2">Microsome membrane</location>
        <topology evidence="2">Peripheral membrane protein</topology>
    </subcellularLocation>
</comment>
<comment type="similarity">
    <text evidence="2">Belongs to the cytochrome P450 family.</text>
</comment>
<accession>P82711</accession>
<gene>
    <name type="primary">Cyp6a19</name>
    <name type="ORF">CG10243</name>
</gene>